<protein>
    <recommendedName>
        <fullName>Zonadhesin</fullName>
    </recommendedName>
</protein>
<dbReference type="EMBL" id="U97068">
    <property type="protein sequence ID" value="AAC26680.1"/>
    <property type="molecule type" value="mRNA"/>
</dbReference>
<dbReference type="EMBL" id="U83190">
    <property type="protein sequence ID" value="AAC53125.1"/>
    <property type="molecule type" value="mRNA"/>
</dbReference>
<dbReference type="PIR" id="T42215">
    <property type="entry name" value="T42215"/>
</dbReference>
<dbReference type="SMR" id="O88799"/>
<dbReference type="FunCoup" id="O88799">
    <property type="interactions" value="61"/>
</dbReference>
<dbReference type="IntAct" id="O88799">
    <property type="interactions" value="1"/>
</dbReference>
<dbReference type="MINT" id="O88799"/>
<dbReference type="STRING" id="10090.ENSMUSP00000114068"/>
<dbReference type="GlyCosmos" id="O88799">
    <property type="glycosylation" value="32 sites, No reported glycans"/>
</dbReference>
<dbReference type="GlyGen" id="O88799">
    <property type="glycosylation" value="32 sites"/>
</dbReference>
<dbReference type="iPTMnet" id="O88799"/>
<dbReference type="PhosphoSitePlus" id="O88799"/>
<dbReference type="SwissPalm" id="O88799"/>
<dbReference type="PaxDb" id="10090-ENSMUSP00000114068"/>
<dbReference type="ProteomicsDB" id="275335"/>
<dbReference type="AGR" id="MGI:106656"/>
<dbReference type="MGI" id="MGI:106656">
    <property type="gene designation" value="Zan"/>
</dbReference>
<dbReference type="eggNOG" id="KOG1216">
    <property type="taxonomic scope" value="Eukaryota"/>
</dbReference>
<dbReference type="InParanoid" id="O88799"/>
<dbReference type="OrthoDB" id="7575919at2759"/>
<dbReference type="PhylomeDB" id="O88799"/>
<dbReference type="PRO" id="PR:O88799"/>
<dbReference type="Proteomes" id="UP000000589">
    <property type="component" value="Unplaced"/>
</dbReference>
<dbReference type="RNAct" id="O88799">
    <property type="molecule type" value="protein"/>
</dbReference>
<dbReference type="GO" id="GO:0005886">
    <property type="term" value="C:plasma membrane"/>
    <property type="evidence" value="ECO:0000266"/>
    <property type="project" value="MGI"/>
</dbReference>
<dbReference type="GO" id="GO:0050840">
    <property type="term" value="F:extracellular matrix binding"/>
    <property type="evidence" value="ECO:0000266"/>
    <property type="project" value="MGI"/>
</dbReference>
<dbReference type="GO" id="GO:0007339">
    <property type="term" value="P:binding of sperm to zona pellucida"/>
    <property type="evidence" value="ECO:0000266"/>
    <property type="project" value="MGI"/>
</dbReference>
<dbReference type="GO" id="GO:0007155">
    <property type="term" value="P:cell adhesion"/>
    <property type="evidence" value="ECO:0007669"/>
    <property type="project" value="UniProtKB-KW"/>
</dbReference>
<dbReference type="GO" id="GO:2000359">
    <property type="term" value="P:regulation of binding of sperm to zona pellucida"/>
    <property type="evidence" value="ECO:0000315"/>
    <property type="project" value="MGI"/>
</dbReference>
<dbReference type="CDD" id="cd06263">
    <property type="entry name" value="MAM"/>
    <property type="match status" value="3"/>
</dbReference>
<dbReference type="CDD" id="cd19941">
    <property type="entry name" value="TIL"/>
    <property type="match status" value="24"/>
</dbReference>
<dbReference type="FunFam" id="2.10.25.10:FF:000055">
    <property type="entry name" value="alpha-tectorin isoform X1"/>
    <property type="match status" value="24"/>
</dbReference>
<dbReference type="FunFam" id="2.60.120.200:FF:000128">
    <property type="entry name" value="enteropeptidase isoform X2"/>
    <property type="match status" value="2"/>
</dbReference>
<dbReference type="FunFam" id="2.60.120.200:FF:000365">
    <property type="entry name" value="Zonadhesin"/>
    <property type="match status" value="1"/>
</dbReference>
<dbReference type="Gene3D" id="2.60.120.200">
    <property type="match status" value="3"/>
</dbReference>
<dbReference type="Gene3D" id="2.10.70.10">
    <property type="entry name" value="Complement Module, domain 1"/>
    <property type="match status" value="5"/>
</dbReference>
<dbReference type="Gene3D" id="2.10.25.10">
    <property type="entry name" value="Laminin"/>
    <property type="match status" value="20"/>
</dbReference>
<dbReference type="InterPro" id="IPR052749">
    <property type="entry name" value="Alpha-tectorin"/>
</dbReference>
<dbReference type="InterPro" id="IPR013320">
    <property type="entry name" value="ConA-like_dom_sf"/>
</dbReference>
<dbReference type="InterPro" id="IPR000742">
    <property type="entry name" value="EGF-like_dom"/>
</dbReference>
<dbReference type="InterPro" id="IPR003645">
    <property type="entry name" value="Fol_N"/>
</dbReference>
<dbReference type="InterPro" id="IPR000998">
    <property type="entry name" value="MAM_dom"/>
</dbReference>
<dbReference type="InterPro" id="IPR036084">
    <property type="entry name" value="Ser_inhib-like_sf"/>
</dbReference>
<dbReference type="InterPro" id="IPR002919">
    <property type="entry name" value="TIL_dom"/>
</dbReference>
<dbReference type="InterPro" id="IPR025615">
    <property type="entry name" value="TILa_dom"/>
</dbReference>
<dbReference type="InterPro" id="IPR014853">
    <property type="entry name" value="VWF/SSPO/ZAN-like_Cys-rich_dom"/>
</dbReference>
<dbReference type="InterPro" id="IPR001007">
    <property type="entry name" value="VWF_dom"/>
</dbReference>
<dbReference type="InterPro" id="IPR001846">
    <property type="entry name" value="VWF_type-D"/>
</dbReference>
<dbReference type="PANTHER" id="PTHR46160">
    <property type="entry name" value="ALPHA-TECTORIN-RELATED"/>
    <property type="match status" value="1"/>
</dbReference>
<dbReference type="PANTHER" id="PTHR46160:SF9">
    <property type="entry name" value="PROTEIN PRY2-RELATED"/>
    <property type="match status" value="1"/>
</dbReference>
<dbReference type="Pfam" id="PF00629">
    <property type="entry name" value="MAM"/>
    <property type="match status" value="3"/>
</dbReference>
<dbReference type="Pfam" id="PF01826">
    <property type="entry name" value="TIL"/>
    <property type="match status" value="25"/>
</dbReference>
<dbReference type="Pfam" id="PF12714">
    <property type="entry name" value="TILa"/>
    <property type="match status" value="25"/>
</dbReference>
<dbReference type="Pfam" id="PF00094">
    <property type="entry name" value="VWD"/>
    <property type="match status" value="4"/>
</dbReference>
<dbReference type="SMART" id="SM00832">
    <property type="entry name" value="C8"/>
    <property type="match status" value="4"/>
</dbReference>
<dbReference type="SMART" id="SM00181">
    <property type="entry name" value="EGF"/>
    <property type="match status" value="16"/>
</dbReference>
<dbReference type="SMART" id="SM00274">
    <property type="entry name" value="FOLN"/>
    <property type="match status" value="20"/>
</dbReference>
<dbReference type="SMART" id="SM00137">
    <property type="entry name" value="MAM"/>
    <property type="match status" value="3"/>
</dbReference>
<dbReference type="SMART" id="SM00214">
    <property type="entry name" value="VWC"/>
    <property type="match status" value="23"/>
</dbReference>
<dbReference type="SMART" id="SM00215">
    <property type="entry name" value="VWC_out"/>
    <property type="match status" value="15"/>
</dbReference>
<dbReference type="SMART" id="SM00216">
    <property type="entry name" value="VWD"/>
    <property type="match status" value="4"/>
</dbReference>
<dbReference type="SUPFAM" id="SSF49899">
    <property type="entry name" value="Concanavalin A-like lectins/glucanases"/>
    <property type="match status" value="3"/>
</dbReference>
<dbReference type="SUPFAM" id="SSF57196">
    <property type="entry name" value="EGF/Laminin"/>
    <property type="match status" value="1"/>
</dbReference>
<dbReference type="SUPFAM" id="SSF57567">
    <property type="entry name" value="Serine protease inhibitors"/>
    <property type="match status" value="25"/>
</dbReference>
<dbReference type="PROSITE" id="PS00022">
    <property type="entry name" value="EGF_1"/>
    <property type="match status" value="1"/>
</dbReference>
<dbReference type="PROSITE" id="PS01186">
    <property type="entry name" value="EGF_2"/>
    <property type="match status" value="18"/>
</dbReference>
<dbReference type="PROSITE" id="PS50026">
    <property type="entry name" value="EGF_3"/>
    <property type="match status" value="1"/>
</dbReference>
<dbReference type="PROSITE" id="PS00740">
    <property type="entry name" value="MAM_1"/>
    <property type="match status" value="1"/>
</dbReference>
<dbReference type="PROSITE" id="PS50060">
    <property type="entry name" value="MAM_2"/>
    <property type="match status" value="3"/>
</dbReference>
<dbReference type="PROSITE" id="PS51233">
    <property type="entry name" value="VWFD"/>
    <property type="match status" value="4"/>
</dbReference>
<comment type="function">
    <text>Binds in a species-specific manner to the zona pellucida of the egg. May be involved in gamete recognition and/or signaling.</text>
</comment>
<comment type="subunit">
    <text>Probably forms covalent oligomers.</text>
</comment>
<comment type="subcellular location">
    <subcellularLocation>
        <location>Cell membrane</location>
        <topology>Single-pass type I membrane protein</topology>
    </subcellularLocation>
    <text>Exclusively on the apical region of the sperm head.</text>
</comment>
<comment type="tissue specificity">
    <text>In testis, primarily in haploid spermatids.</text>
</comment>
<comment type="domain">
    <text>The MAM domains probably mediates sperm adhesion to the zona pellucida.</text>
</comment>
<comment type="domain">
    <text>During sperm migration through the reproductive tracts, the mucin-like domain might inhibit inappropriate trapping of spermatozoa or promoting adhesion to the oviductal isthmus.</text>
</comment>
<comment type="domain">
    <text evidence="1">The VWFD domain 2 may mediate covalent oligomerization.</text>
</comment>
<feature type="signal peptide" evidence="2">
    <location>
        <begin position="1"/>
        <end position="17"/>
    </location>
</feature>
<feature type="chain" id="PRO_0000007784" description="Zonadhesin">
    <location>
        <begin position="18"/>
        <end position="5376"/>
    </location>
</feature>
<feature type="topological domain" description="Extracellular" evidence="2">
    <location>
        <begin position="18"/>
        <end position="5310"/>
    </location>
</feature>
<feature type="transmembrane region" description="Helical" evidence="2">
    <location>
        <begin position="5311"/>
        <end position="5337"/>
    </location>
</feature>
<feature type="topological domain" description="Cytoplasmic" evidence="2">
    <location>
        <begin position="5338"/>
        <end position="5376"/>
    </location>
</feature>
<feature type="domain" description="MAM 1" evidence="4">
    <location>
        <begin position="45"/>
        <end position="210"/>
    </location>
</feature>
<feature type="domain" description="MAM 2" evidence="4">
    <location>
        <begin position="215"/>
        <end position="374"/>
    </location>
</feature>
<feature type="domain" description="MAM 3" evidence="4">
    <location>
        <begin position="377"/>
        <end position="542"/>
    </location>
</feature>
<feature type="domain" description="TIL 1">
    <location>
        <begin position="1171"/>
        <end position="1220"/>
    </location>
</feature>
<feature type="domain" description="VWFC 1">
    <location>
        <begin position="1227"/>
        <end position="1275"/>
    </location>
</feature>
<feature type="domain" description="VWFD 1" evidence="5">
    <location>
        <begin position="1280"/>
        <end position="1462"/>
    </location>
</feature>
<feature type="domain" description="TIL 2">
    <location>
        <begin position="1555"/>
        <end position="1608"/>
    </location>
</feature>
<feature type="domain" description="VWFC 2">
    <location>
        <begin position="1609"/>
        <end position="1664"/>
    </location>
</feature>
<feature type="domain" description="VWFD 2" evidence="5">
    <location>
        <begin position="1669"/>
        <end position="1849"/>
    </location>
</feature>
<feature type="domain" description="TIL 3">
    <location>
        <begin position="1941"/>
        <end position="1995"/>
    </location>
</feature>
<feature type="domain" description="VWFC 3">
    <location>
        <begin position="1996"/>
        <end position="2052"/>
    </location>
</feature>
<feature type="domain" description="VWFD 3" evidence="5">
    <location>
        <begin position="2056"/>
        <end position="2239"/>
    </location>
</feature>
<feature type="domain" description="TIL 4">
    <location>
        <begin position="2340"/>
        <end position="2398"/>
    </location>
</feature>
<feature type="domain" description="VWFC 4">
    <location>
        <begin position="2399"/>
        <end position="2454"/>
    </location>
</feature>
<feature type="domain" description="TIL 5">
    <location>
        <begin position="2460"/>
        <end position="2518"/>
    </location>
</feature>
<feature type="domain" description="VWFC 5">
    <location>
        <begin position="2519"/>
        <end position="2574"/>
    </location>
</feature>
<feature type="domain" description="TIL 6">
    <location>
        <begin position="2580"/>
        <end position="2638"/>
    </location>
</feature>
<feature type="domain" description="VWFC 6">
    <location>
        <begin position="2639"/>
        <end position="2694"/>
    </location>
</feature>
<feature type="domain" description="TIL 7">
    <location>
        <begin position="2700"/>
        <end position="2758"/>
    </location>
</feature>
<feature type="domain" description="VWFC 7">
    <location>
        <begin position="2759"/>
        <end position="2814"/>
    </location>
</feature>
<feature type="domain" description="TIL 8">
    <location>
        <begin position="2820"/>
        <end position="2878"/>
    </location>
</feature>
<feature type="domain" description="VWFC 8">
    <location>
        <begin position="2879"/>
        <end position="2934"/>
    </location>
</feature>
<feature type="domain" description="TIL 9">
    <location>
        <begin position="2940"/>
        <end position="2998"/>
    </location>
</feature>
<feature type="domain" description="VWFC 9">
    <location>
        <begin position="2999"/>
        <end position="3054"/>
    </location>
</feature>
<feature type="domain" description="TIL 10">
    <location>
        <begin position="3060"/>
        <end position="3118"/>
    </location>
</feature>
<feature type="domain" description="VWFC 10">
    <location>
        <begin position="3119"/>
        <end position="3174"/>
    </location>
</feature>
<feature type="domain" description="TIL 11">
    <location>
        <begin position="3180"/>
        <end position="3238"/>
    </location>
</feature>
<feature type="domain" description="VWFC 11">
    <location>
        <begin position="3239"/>
        <end position="3294"/>
    </location>
</feature>
<feature type="domain" description="TIL 12">
    <location>
        <begin position="3300"/>
        <end position="3355"/>
    </location>
</feature>
<feature type="domain" description="VWFC 12">
    <location>
        <begin position="3356"/>
        <end position="3411"/>
    </location>
</feature>
<feature type="domain" description="TIL 13">
    <location>
        <begin position="3417"/>
        <end position="3475"/>
    </location>
</feature>
<feature type="domain" description="VWFC 13">
    <location>
        <begin position="3476"/>
        <end position="3531"/>
    </location>
</feature>
<feature type="domain" description="TIL 14">
    <location>
        <begin position="3537"/>
        <end position="3595"/>
    </location>
</feature>
<feature type="domain" description="VWFC 14">
    <location>
        <begin position="3596"/>
        <end position="3651"/>
    </location>
</feature>
<feature type="domain" description="TIL 15">
    <location>
        <begin position="3657"/>
        <end position="3715"/>
    </location>
</feature>
<feature type="domain" description="VWFC 15">
    <location>
        <begin position="3716"/>
        <end position="3771"/>
    </location>
</feature>
<feature type="domain" description="TIL 16">
    <location>
        <begin position="3777"/>
        <end position="3835"/>
    </location>
</feature>
<feature type="domain" description="VWFC 16">
    <location>
        <begin position="3836"/>
        <end position="3891"/>
    </location>
</feature>
<feature type="domain" description="TIL 17">
    <location>
        <begin position="3893"/>
        <end position="3951"/>
    </location>
</feature>
<feature type="domain" description="VWFC 17">
    <location>
        <begin position="3952"/>
        <end position="4007"/>
    </location>
</feature>
<feature type="domain" description="TIL 18">
    <location>
        <begin position="4029"/>
        <end position="4087"/>
    </location>
</feature>
<feature type="domain" description="VWFC 18">
    <location>
        <begin position="4088"/>
        <end position="4143"/>
    </location>
</feature>
<feature type="domain" description="TIL 19">
    <location>
        <begin position="4149"/>
        <end position="4207"/>
    </location>
</feature>
<feature type="domain" description="VWFC 19">
    <location>
        <begin position="4208"/>
        <end position="4262"/>
    </location>
</feature>
<feature type="domain" description="TIL 20">
    <location>
        <begin position="4264"/>
        <end position="4322"/>
    </location>
</feature>
<feature type="domain" description="VWFC 20">
    <location>
        <begin position="4323"/>
        <end position="4378"/>
    </location>
</feature>
<feature type="domain" description="TIL 21">
    <location>
        <begin position="4384"/>
        <end position="4442"/>
    </location>
</feature>
<feature type="domain" description="VWFC 21">
    <location>
        <begin position="4443"/>
        <end position="4498"/>
    </location>
</feature>
<feature type="domain" description="TIL 22">
    <location>
        <begin position="4504"/>
        <end position="4562"/>
    </location>
</feature>
<feature type="domain" description="VWFC 22">
    <location>
        <begin position="4563"/>
        <end position="4618"/>
    </location>
</feature>
<feature type="domain" description="TIL 23">
    <location>
        <begin position="4624"/>
        <end position="4682"/>
    </location>
</feature>
<feature type="domain" description="VWFC 23">
    <location>
        <begin position="4683"/>
        <end position="4738"/>
    </location>
</feature>
<feature type="domain" description="TIL 24">
    <location>
        <begin position="4744"/>
        <end position="4802"/>
    </location>
</feature>
<feature type="domain" description="VWFC 24">
    <location>
        <begin position="4803"/>
        <end position="4858"/>
    </location>
</feature>
<feature type="domain" description="VWFD 4" evidence="5">
    <location>
        <begin position="4863"/>
        <end position="5038"/>
    </location>
</feature>
<feature type="domain" description="TIL 25">
    <location>
        <begin position="5150"/>
        <end position="5203"/>
    </location>
</feature>
<feature type="domain" description="VWFC 25">
    <location>
        <begin position="5204"/>
        <end position="5258"/>
    </location>
</feature>
<feature type="domain" description="EGF-like" evidence="3">
    <location>
        <begin position="5259"/>
        <end position="5295"/>
    </location>
</feature>
<feature type="region of interest" description="80 X heptapeptide repeats (approximate) (mucin-like domain)">
    <location>
        <begin position="547"/>
        <end position="1170"/>
    </location>
</feature>
<feature type="region of interest" description="Disordered" evidence="6">
    <location>
        <begin position="553"/>
        <end position="579"/>
    </location>
</feature>
<feature type="region of interest" description="Disordered" evidence="6">
    <location>
        <begin position="1037"/>
        <end position="1113"/>
    </location>
</feature>
<feature type="compositionally biased region" description="Low complexity" evidence="6">
    <location>
        <begin position="1052"/>
        <end position="1113"/>
    </location>
</feature>
<feature type="glycosylation site" description="N-linked (GlcNAc...) asparagine" evidence="2">
    <location>
        <position position="339"/>
    </location>
</feature>
<feature type="glycosylation site" description="N-linked (GlcNAc...) asparagine" evidence="2">
    <location>
        <position position="499"/>
    </location>
</feature>
<feature type="glycosylation site" description="N-linked (GlcNAc...) asparagine" evidence="2">
    <location>
        <position position="1216"/>
    </location>
</feature>
<feature type="glycosylation site" description="N-linked (GlcNAc...) asparagine" evidence="2">
    <location>
        <position position="1239"/>
    </location>
</feature>
<feature type="glycosylation site" description="N-linked (GlcNAc...) asparagine" evidence="2">
    <location>
        <position position="1314"/>
    </location>
</feature>
<feature type="glycosylation site" description="N-linked (GlcNAc...) asparagine" evidence="2">
    <location>
        <position position="1814"/>
    </location>
</feature>
<feature type="glycosylation site" description="N-linked (GlcNAc...) asparagine" evidence="2">
    <location>
        <position position="1908"/>
    </location>
</feature>
<feature type="glycosylation site" description="N-linked (GlcNAc...) asparagine" evidence="2">
    <location>
        <position position="1933"/>
    </location>
</feature>
<feature type="glycosylation site" description="N-linked (GlcNAc...) asparagine" evidence="2">
    <location>
        <position position="2028"/>
    </location>
</feature>
<feature type="glycosylation site" description="N-linked (GlcNAc...) asparagine" evidence="2">
    <location>
        <position position="2111"/>
    </location>
</feature>
<feature type="glycosylation site" description="N-linked (GlcNAc...) asparagine" evidence="2">
    <location>
        <position position="2142"/>
    </location>
</feature>
<feature type="glycosylation site" description="N-linked (GlcNAc...) asparagine" evidence="2">
    <location>
        <position position="2332"/>
    </location>
</feature>
<feature type="glycosylation site" description="N-linked (GlcNAc...) asparagine" evidence="2">
    <location>
        <position position="2533"/>
    </location>
</feature>
<feature type="glycosylation site" description="N-linked (GlcNAc...) asparagine" evidence="2">
    <location>
        <position position="2575"/>
    </location>
</feature>
<feature type="glycosylation site" description="N-linked (GlcNAc...) asparagine" evidence="2">
    <location>
        <position position="2692"/>
    </location>
</feature>
<feature type="glycosylation site" description="N-linked (GlcNAc...) asparagine" evidence="2">
    <location>
        <position position="2812"/>
    </location>
</feature>
<feature type="glycosylation site" description="N-linked (GlcNAc...) asparagine" evidence="2">
    <location>
        <position position="3052"/>
    </location>
</feature>
<feature type="glycosylation site" description="N-linked (GlcNAc...) asparagine" evidence="2">
    <location>
        <position position="3065"/>
    </location>
</feature>
<feature type="glycosylation site" description="N-linked (GlcNAc...) asparagine" evidence="2">
    <location>
        <position position="3144"/>
    </location>
</feature>
<feature type="glycosylation site" description="N-linked (GlcNAc...) asparagine" evidence="2">
    <location>
        <position position="3172"/>
    </location>
</feature>
<feature type="glycosylation site" description="N-linked (GlcNAc...) asparagine" evidence="2">
    <location>
        <position position="3288"/>
    </location>
</feature>
<feature type="glycosylation site" description="N-linked (GlcNAc...) asparagine" evidence="2">
    <location>
        <position position="3292"/>
    </location>
</feature>
<feature type="glycosylation site" description="N-linked (GlcNAc...) asparagine" evidence="2">
    <location>
        <position position="3782"/>
    </location>
</feature>
<feature type="glycosylation site" description="N-linked (GlcNAc...) asparagine" evidence="2">
    <location>
        <position position="4005"/>
    </location>
</feature>
<feature type="glycosylation site" description="N-linked (GlcNAc...) asparagine" evidence="2">
    <location>
        <position position="4136"/>
    </location>
</feature>
<feature type="glycosylation site" description="N-linked (GlcNAc...) asparagine" evidence="2">
    <location>
        <position position="4243"/>
    </location>
</feature>
<feature type="glycosylation site" description="N-linked (GlcNAc...) asparagine" evidence="2">
    <location>
        <position position="4254"/>
    </location>
</feature>
<feature type="glycosylation site" description="N-linked (GlcNAc...) asparagine" evidence="2">
    <location>
        <position position="4335"/>
    </location>
</feature>
<feature type="glycosylation site" description="N-linked (GlcNAc...) asparagine" evidence="2">
    <location>
        <position position="4376"/>
    </location>
</feature>
<feature type="glycosylation site" description="N-linked (GlcNAc...) asparagine" evidence="2">
    <location>
        <position position="4586"/>
    </location>
</feature>
<feature type="glycosylation site" description="N-linked (GlcNAc...) asparagine" evidence="2">
    <location>
        <position position="5136"/>
    </location>
</feature>
<feature type="glycosylation site" description="N-linked (GlcNAc...) asparagine" evidence="2">
    <location>
        <position position="5252"/>
    </location>
</feature>
<feature type="disulfide bond" evidence="5">
    <location>
        <begin position="1282"/>
        <end position="1417"/>
    </location>
</feature>
<feature type="disulfide bond" evidence="5">
    <location>
        <begin position="1304"/>
        <end position="1461"/>
    </location>
</feature>
<feature type="disulfide bond" evidence="5">
    <location>
        <begin position="1671"/>
        <end position="1809"/>
    </location>
</feature>
<feature type="disulfide bond" evidence="5">
    <location>
        <begin position="1693"/>
        <end position="1848"/>
    </location>
</feature>
<feature type="disulfide bond" evidence="5">
    <location>
        <begin position="2058"/>
        <end position="2200"/>
    </location>
</feature>
<feature type="disulfide bond" evidence="5">
    <location>
        <begin position="2080"/>
        <end position="2238"/>
    </location>
</feature>
<feature type="disulfide bond" evidence="5">
    <location>
        <begin position="4865"/>
        <end position="5001"/>
    </location>
</feature>
<feature type="disulfide bond" evidence="1">
    <location>
        <begin position="5263"/>
        <end position="5274"/>
    </location>
</feature>
<feature type="disulfide bond" evidence="1">
    <location>
        <begin position="5268"/>
        <end position="5283"/>
    </location>
</feature>
<feature type="disulfide bond" evidence="1">
    <location>
        <begin position="5285"/>
        <end position="5294"/>
    </location>
</feature>
<organism>
    <name type="scientific">Mus musculus</name>
    <name type="common">Mouse</name>
    <dbReference type="NCBI Taxonomy" id="10090"/>
    <lineage>
        <taxon>Eukaryota</taxon>
        <taxon>Metazoa</taxon>
        <taxon>Chordata</taxon>
        <taxon>Craniata</taxon>
        <taxon>Vertebrata</taxon>
        <taxon>Euteleostomi</taxon>
        <taxon>Mammalia</taxon>
        <taxon>Eutheria</taxon>
        <taxon>Euarchontoglires</taxon>
        <taxon>Glires</taxon>
        <taxon>Rodentia</taxon>
        <taxon>Myomorpha</taxon>
        <taxon>Muroidea</taxon>
        <taxon>Muridae</taxon>
        <taxon>Murinae</taxon>
        <taxon>Mus</taxon>
        <taxon>Mus</taxon>
    </lineage>
</organism>
<keyword id="KW-0130">Cell adhesion</keyword>
<keyword id="KW-1003">Cell membrane</keyword>
<keyword id="KW-1015">Disulfide bond</keyword>
<keyword id="KW-0245">EGF-like domain</keyword>
<keyword id="KW-0325">Glycoprotein</keyword>
<keyword id="KW-0472">Membrane</keyword>
<keyword id="KW-1185">Reference proteome</keyword>
<keyword id="KW-0677">Repeat</keyword>
<keyword id="KW-0732">Signal</keyword>
<keyword id="KW-0812">Transmembrane</keyword>
<keyword id="KW-1133">Transmembrane helix</keyword>
<sequence length="5376" mass="579913">MALPVWTLMLLVGAAWGQEQVPAWRPNSPDLGPMVHTSREDSILSKCDFEDNSRPFCDWSQMSADDGDWIRTTGPSLTGTSGPPGGYPNGEGYYLHMDPKTFPQGGVARLRSPDIWEQGPLCVHFAFHMFGLSWGAQLRLLLLRGRKHLRPYVLWKHVNTQSPSWMPTTVTVPADHDIPSWLMFEGMRGNTAYLDISLDGLSIQRGTCNQVCMSQMCTFDTLNDLCGWSWVPTATGAKWTQKKGPTGKQGVGPAEDFSNPGNGYYMLLDSTNARPGQKAVLLSPLSHSRGCMTLSFHYIMHGQGHEEGLFVYATFLGNIRKYTLFSGHPGPDWQAVSVNYTGQGQIQFMVVGMFGNIPEPAIAVDAISIAPCGESFPQCDFEDRVHPFCDWNQVYGDMGHWSWGSKSVPTLIAGSPREFPYGGEHYIFFDSVKLSQEGQSARLVSPPFCAPGGICVEFAYHMYGLGKGTTLKLLLGSPAGSSPIPLWNRVGSQSSGWMNSSVTIPKGYQQPMQLFIEATRGTSTAFVVALNFILISHGPCRVLLQTEIPSSPLLPPTGPSESTVPTLPMEQPTSPTKATTVTIEIPTTPTEEATIPTETTTVPTEVINVSPKETSIPPEVTIPTEVITVSPEEIISPTEVTPVPTDVTAAYVEATNASPEETSVPPEVTILTEVTTVSPEETTVPTEVPIVLIEATAFPTGETTLYTEVPTVPTEVTGVHTEVTNVSPEETSVPTEETISTEVTTVSPEETTVPTEVPIVLIEATASPTGEITLYTEVPTVPTEVTGVHTEVTNVSPEETSVPTEETISTEVTTVSPEETTLPTEVPTVSTEVTNVSPEETSVPPEETILTTLYTEVPTVPTEVTGVHTEVTNVSPEETSVPTEETISTEVTTVSPEETTLPTEVPTVSTEVTNVSPEETSVPPEETILTEITTVSPEETVFPIEGTTLPTEVLTVPIEVTTFPTGETTVPTEVPTVSTEMTGVHTEVTTVFPEETSIPTEVATVLPASIPPEETTTPTEVTTTPPEETTIPAEVTTVPPASIPPEETASLTEVTTTPPEETTTPTEVTTVPPEKTTIPTEVTTVPPASIFPEETTVPPEETTIASEETTVSTQETTLLTEQSAVTQTSIACRPPCPSPPLMPIGPLLSKPPGVSMFSLAPTTGVSTTESCPPNAHIELCACPASCESPKPSCQPPCIPGCVCNPGFLFSNNQCINESSCNCPYNNKHYKPGEEWFTPNCTERCRCLPGSLMECQISQCGTHTVCQLKSDQYQCEPYGKATCLVYGDLHFVTFDERHIGFTGTCTYILTQTCSNSTDHFFRITANTEERGVEGVSCLDKVVISLPETTVTMISGRHTLIGDQEVTLPAILSDDTYVGLSGRFVELRTTFGLRVRWDGDQQLFVTVSSTFSGKLCGFCGNYDGDSSNDNLKSDGMMTHDEEELRLSWQVEEDEDKDWVSSRCQKKKNPPSCDAALGSTMSGPKLCGQLVNPSGPFEACLLHLKASSFLDNCVTDMCSFQGLQQKLCARMSAMTATCQDAGYPVKPWREPQFCPLVCPKNSRYSLCAKPCPETCHPISTTQHCSDKCVEGCECDPGFILSGSECVPSSQCGCTSFQGRYFKLQEQWFNPDCKEICTCESHNHILCKPWKCKAQEACSYKNGVLGCHAQGAATCMVSGDPHYLTFDGALHHFMGTCTYVLTQPCWSKSQENNFVVSATNEIHDGNLEVSYVKAVHVQVFDLKISMFKGQKVVLNNQRVVLPVWPSQGRVTIRLSGIFVLLYTNFGLQVRYDGRHLVEVTVPSSYTGSLCGLCGNYNNNSMDDNLRADMKPAGNSLLLGAAWKILEASDPGCFLAGGKPSRCADSDMDDVWTKKCAILMNPLGPFSNCHEAVPPQASFSSCVYGQCETNGDNLTFCHSLQAYASLCAQAGQVTTWRNSTFCPMRCPPRSSYNPCANSCPATCLTLSTPRDCPTLPCVEGCECQSGHILSGTTCVPLRQCGCSDQDGSYHLLGESWYTEKTCTTLCTCSAHSNITCSPTACKANHVCLRQEGLLRCAAEMGECRISEDSQIVSFDDHSHPIQDTCTYILVKVCHPNTNMPFFMISAKTDINTNGKNKTFGVYQLYIDIFNFHITLQKDHLVLISLINDSIVTLPTTTHIPGVSVMTEDVYTIVTIKDEIQVKFESNNFLDVKIPASSNGKVCGVCGNFNGEEEDELMTPSGELAEDEQEFMNSWKDKSMDPNCQKIEGQNLQVEQQEIMNGKCRPIDFEKAQANCQTALQGPAWAHCSSRVPIKPFLLKCMNSFCEFRELFRALCDSLQSFEDACQNQGLKPPIWRNSSFCPLECPAHSHYTNCLPSCPPSCLDPDSRCEGSGHKVPATCREGCICQPDYVLLNDKCVLRSHCGCKDAQGVFIPAGKTWISEDCTQSCTCMKGSMRCWDFQCPPGTYCKNSNDGSSNCVKISLQCPAHSKFTDCLPPCHPSCSDPDGHCEGISTNAHSNCKEGCVCQPGYVLRNDKCVLRIECGCQHTQGGFIPAGKNWTSRGCSQSCDCMEGVIRCQNFQCPSGTYCQDIEDGTSNCANITLQCPAHSSFTNCLPPCQPSCSDPEGHCGGSTTKAPSACQEGCVCEPDYVVLNNKCVPRIECGCKDAQGVLIPADKIWINKGCTQTCACVTGTIHCRDFQCPSGTYCKDIKDDASNCTEIILQCPDHSLYTHCLPSCLLSCSDPDGLCRGTSPEAPSTCKEGCVCDPDYVLSNDKCVLRIECGCKDAQGVLIPAGKTWINRGCTQSCSCMGGAIQCQNFKCPSEAYCQDMEDGNSNCTSIPLQCPAHSHYTNCLPTCQPSCSDPDGHCEGSSTKAPSACKEGCVCEPDYVMLNNKCVPRIECGCKDTQGVLIPADKTWINRGCTQSCTCRGGAIQCQKYHCSSGTYCKDMEDDSSSCATITLQCPAHSHFTNCLPPCQPSCLDSEGHCEGSTTKAPSACQEGCVCEPDYVVLNNKCVPRIECGCKDAQGVLIPADKTWINRGCTQSCTCKGGAIQCQKFQCPSETYCKDIEDGNSNCTRISLQCPANSNFTSCLPSCQPSCSNTDVHCEGSSPNTLSSCREGCVCQSGYVLHNDKCILRNQCGCKDAQGALIPEGKTWITSGCTQSCNCTGGAIQCQNFQCPLKTYCKDLKDGSSNCTNIPLQCPAHSRYTNCLPSCPPLCLDPEGLCEGTSPKVPSTCREGCICQPGYLMHKNKCVLRIFCGCKNTQGAFISADKTWISRGCTQSCTCPAGAIHCRNFKCPSGTYCKNGDNGSSNCTEITLQCPTNSQFTDCLPSCVPSCSNRCEVTSPSVPSSCREGCLCNHGFVFSEDKCVPRTQCGCKDARGAIIPAGKTWTSKGCTQSCACVEGNIQCQNFQCPPETYCKDNSEGSSTCTKITLQCPAHTQYTSCLPSCLPSCLDPEGLCKDISPKVPSTCKEGCVCQSGYVLNSDKCVLRAECDCKDAQGALIPAGKTWTSPGCTQSCACMGGAVQCQSSQCPPGTYCKDNEDGNSNCAKITLQCPAHSLFTNCLPPCLPSCLDPDGLCKGASPKVPSTCKEGCICQSGYVLSNNKCLLRNRCGCKDAHGALIPEDKTWVSRGCTQSCVCTGGSIQCLSSQCPPGAYCKDNEDGSSNCARIPPQCPANSHYTDCFPPCPPSCSDPEGHCEASGPRVLSTCREGCLCNPGFVLDRDKCVPRVECGCKDAQGALIPSGKTWTSPGCTQSCACMGGVVQCQSSQCPPGTYCKDNEDGNSNCAKITLQCPTHSNYTDCLPFCLPSCLDPSALCGGTSPKGPSTCKEGCVCQPGYVLDKDKCILKIECGCRDTQGAVIPAGKTWLSTGCIQSCACVEGTIQCQNFQCPPGTYCNHNNNCAKIPLQCPAHSHFTSCLPSCPPSCANLDGSCEQTSPKVPSTCKEGCLCQPGYFLNNGKCVLQTHCDCKDAEGGLVPAGKTWTSKDCTQSCACTGGAVQCQNFQCPLGTYCKDSGDGSSNCTKIHKGAMGDGVLMAGGIRALQCPAHSHFTSCLPSCPPSCSNLDGSCVESNFKAPSVCKKGCICQPGYLLNNDKCVLRIQCGCKDTQGGLIPAGRTWISSDCTKSCSCMGGIIQCRDFQCPPGTYCKESNDSSRTCAKIPLQCPAHSHYTNCLPACSRSCTDLDGHCEGTSPKVPSPCKEGCLCQPGYVVHNHKCVLQIHCGCKDAQGGFVPAGKTWISRGCTQSCACVGGAVQCHNFTCPTGTQCQNSSCSKITVQCPAHSQYTTCLPSCLPSCFDPEGLCGGASPRAPSTCREGCVCEADYVLREDKCVLRTQCGCKDAQGDLIPANKTWLTRGCAQKCTCKGGNIHCWNFKCPLGTECKDSVDGGSNCTKIALQCPAHSHHTYCLPSCIPSCSNVNDRCESTSLQRPSTCIEGCLCHSGFVFSKDKCVPRTQCGCKDSQGTLIPAGKNWITTGCSQRCTCTGGLVQCHDFQCPSGAECQDIEDGNSNCVEITVQCPAHSHYSKCLPPCQPSCSDPDGHCEGTSPEAPSTCEEGCVCEPDYVLSNDKCVPSSECGCKDAHGVLIPESKTWVSRGCTKNCTCKGGTVQCHDFSCPTGSRCLDNNEGNSNCVTYALKCPAHSLYTNCLPSCLPSCSDPEGLCGGTSPEVPSTCKEGCICQSGYVLHKNKCMLRIHCDCKDFQGSLIKTGQTWISSGCSKICTCKGGFFQCQSYKCPSGTQCEESEDGSSNCVSSTMKCPANSLYTHCLPTCLPSCSNPDGRCEGTSHKAPSTCREGCVCQPGYLLNKDTCVHKNQCGCKDIRGNIIPAGNTWISSDCTQSCACTDGVIQCQNFVCPSGSHCQYNEDGSSDCAANKLERCTIFGDPYYLTFDGFTYHFLGRMNYYLIKTVDKLPRGIEPLIMEGRNKISPKGSSTLHEVTTIVYGYKIQLQEELVVLVNDEKVAVPYNPNEHLRVMLRAQRLLLVTDFEMVLDFDGKHSAVISLPTTYRGLTRGLCGNYDRDQSNELMLPSGVLTSNVHVFGNSWEVKAQHAFFRFPRALPEDEERDEEPDLLQSECSQEQTALISSTQACRVLVDPQGPFAACHQIIAPEPFEQRCMLDMCTGWKTKEEEELRCRVLSGYAIICQEAGANMTGWRDHTHCAMTCPANTVYQRCMTPCPASCAKFVTPKVCEGPCVEGCASLPGYIYSDTQSLPVTHCGCTADGIYYKLGDSFVTNDCSQHCTCASQGILLCEPYGCRAGESCMVANFTRGCFQDSPCLQNPCHNDGRCEEQGATFICHCDFGYGGEFCTEPQDITTRKKIEASSLVAILPGVLVMVLVPVLLPRVYVYMATRTTMGRRRMKRKEKKLLRQSRLRLEDADVPEPTFKATEF</sequence>
<name>ZAN_MOUSE</name>
<accession>O88799</accession>
<accession>O08647</accession>
<gene>
    <name type="primary">Zan</name>
</gene>
<reference key="1">
    <citation type="journal article" date="1998" name="J. Biol. Chem.">
        <title>Species diversity in the structure of zonadhesin, a sperm-specific membrane protein containing multiple cell adhesion molecule-like domains.</title>
        <authorList>
            <person name="Gao Z."/>
            <person name="Garbers D.L."/>
        </authorList>
    </citation>
    <scope>NUCLEOTIDE SEQUENCE [MRNA]</scope>
    <source>
        <tissue>Testis</tissue>
    </source>
</reference>
<reference key="2">
    <citation type="journal article" date="1997" name="Genomics">
        <title>Chromosome localization of the mouse zonadhesin gene and the human zonadhesin gene (ZAN).</title>
        <authorList>
            <person name="Gao Z."/>
            <person name="Harumi T."/>
            <person name="Garbers D.L."/>
        </authorList>
    </citation>
    <scope>NUCLEOTIDE SEQUENCE [MRNA] OF 4864-5376</scope>
    <source>
        <tissue>Testis</tissue>
    </source>
</reference>
<reference key="3">
    <citation type="journal article" date="2010" name="Cell">
        <title>A tissue-specific atlas of mouse protein phosphorylation and expression.</title>
        <authorList>
            <person name="Huttlin E.L."/>
            <person name="Jedrychowski M.P."/>
            <person name="Elias J.E."/>
            <person name="Goswami T."/>
            <person name="Rad R."/>
            <person name="Beausoleil S.A."/>
            <person name="Villen J."/>
            <person name="Haas W."/>
            <person name="Sowa M.E."/>
            <person name="Gygi S.P."/>
        </authorList>
    </citation>
    <scope>IDENTIFICATION BY MASS SPECTROMETRY [LARGE SCALE ANALYSIS]</scope>
    <source>
        <tissue>Testis</tissue>
    </source>
</reference>
<proteinExistence type="evidence at protein level"/>
<evidence type="ECO:0000250" key="1"/>
<evidence type="ECO:0000255" key="2"/>
<evidence type="ECO:0000255" key="3">
    <source>
        <dbReference type="PROSITE-ProRule" id="PRU00076"/>
    </source>
</evidence>
<evidence type="ECO:0000255" key="4">
    <source>
        <dbReference type="PROSITE-ProRule" id="PRU00128"/>
    </source>
</evidence>
<evidence type="ECO:0000255" key="5">
    <source>
        <dbReference type="PROSITE-ProRule" id="PRU00580"/>
    </source>
</evidence>
<evidence type="ECO:0000256" key="6">
    <source>
        <dbReference type="SAM" id="MobiDB-lite"/>
    </source>
</evidence>